<feature type="initiator methionine" description="Removed" evidence="1">
    <location>
        <position position="1"/>
    </location>
</feature>
<feature type="chain" id="PRO_0000453194" description="Superoxide dismutase [Cu-Zn]">
    <location>
        <begin position="2"/>
        <end position="154"/>
    </location>
</feature>
<feature type="binding site" evidence="1">
    <location>
        <position position="47"/>
    </location>
    <ligand>
        <name>Cu cation</name>
        <dbReference type="ChEBI" id="CHEBI:23378"/>
        <note>catalytic</note>
    </ligand>
</feature>
<feature type="binding site" evidence="1">
    <location>
        <position position="49"/>
    </location>
    <ligand>
        <name>Cu cation</name>
        <dbReference type="ChEBI" id="CHEBI:23378"/>
        <note>catalytic</note>
    </ligand>
</feature>
<feature type="binding site" evidence="1">
    <location>
        <position position="64"/>
    </location>
    <ligand>
        <name>Cu cation</name>
        <dbReference type="ChEBI" id="CHEBI:23378"/>
        <note>catalytic</note>
    </ligand>
</feature>
<feature type="binding site" evidence="1">
    <location>
        <position position="64"/>
    </location>
    <ligand>
        <name>Zn(2+)</name>
        <dbReference type="ChEBI" id="CHEBI:29105"/>
        <label>1</label>
        <note>structural</note>
    </ligand>
</feature>
<feature type="binding site" evidence="1">
    <location>
        <position position="72"/>
    </location>
    <ligand>
        <name>Zn(2+)</name>
        <dbReference type="ChEBI" id="CHEBI:29105"/>
        <label>1</label>
        <note>structural</note>
    </ligand>
</feature>
<feature type="binding site" evidence="1">
    <location>
        <position position="81"/>
    </location>
    <ligand>
        <name>Zn(2+)</name>
        <dbReference type="ChEBI" id="CHEBI:29105"/>
        <label>1</label>
        <note>structural</note>
    </ligand>
</feature>
<feature type="binding site" evidence="1">
    <location>
        <position position="84"/>
    </location>
    <ligand>
        <name>Zn(2+)</name>
        <dbReference type="ChEBI" id="CHEBI:29105"/>
        <label>1</label>
        <note>structural</note>
    </ligand>
</feature>
<feature type="binding site" evidence="1">
    <location>
        <position position="121"/>
    </location>
    <ligand>
        <name>Cu cation</name>
        <dbReference type="ChEBI" id="CHEBI:23378"/>
        <note>catalytic</note>
    </ligand>
</feature>
<feature type="binding site" evidence="1">
    <location>
        <position position="144"/>
    </location>
    <ligand>
        <name>substrate</name>
    </ligand>
</feature>
<feature type="disulfide bond" evidence="1">
    <location>
        <begin position="58"/>
        <end position="147"/>
    </location>
</feature>
<keyword id="KW-0049">Antioxidant</keyword>
<keyword id="KW-1003">Cell membrane</keyword>
<keyword id="KW-0186">Copper</keyword>
<keyword id="KW-0963">Cytoplasm</keyword>
<keyword id="KW-1015">Disulfide bond</keyword>
<keyword id="KW-0472">Membrane</keyword>
<keyword id="KW-0479">Metal-binding</keyword>
<keyword id="KW-0496">Mitochondrion</keyword>
<keyword id="KW-0560">Oxidoreductase</keyword>
<keyword id="KW-0862">Zinc</keyword>
<reference evidence="11" key="1">
    <citation type="journal article" date="2001" name="Gene">
        <title>Molecular cloning, phylogenetic analysis and three-dimensional modeling of Cu,Zn superoxide dismutase (CnSOD1) from three varieties of Cryptococcus neoformans.</title>
        <authorList>
            <person name="Chaturvedi S."/>
            <person name="Hamilton A.J."/>
            <person name="Hobby P."/>
            <person name="Zhu G."/>
            <person name="Lowry C.V."/>
            <person name="Chaturvedi V."/>
        </authorList>
    </citation>
    <scope>NUCLEOTIDE SEQUENCE [GENOMIC DNA / MRNA]</scope>
    <source>
        <strain evidence="8">H99 / ATCC 208821 / CBS 10515 / FGSC 9487</strain>
    </source>
</reference>
<reference evidence="13" key="2">
    <citation type="journal article" date="2014" name="PLoS Genet.">
        <title>Analysis of the genome and transcriptome of Cryptococcus neoformans var. grubii reveals complex RNA expression and microevolution leading to virulence attenuation.</title>
        <authorList>
            <person name="Janbon G."/>
            <person name="Ormerod K.L."/>
            <person name="Paulet D."/>
            <person name="Byrnes E.J. III"/>
            <person name="Yadav V."/>
            <person name="Chatterjee G."/>
            <person name="Mullapudi N."/>
            <person name="Hon C.-C."/>
            <person name="Billmyre R.B."/>
            <person name="Brunel F."/>
            <person name="Bahn Y.-S."/>
            <person name="Chen W."/>
            <person name="Chen Y."/>
            <person name="Chow E.W.L."/>
            <person name="Coppee J.-Y."/>
            <person name="Floyd-Averette A."/>
            <person name="Gaillardin C."/>
            <person name="Gerik K.J."/>
            <person name="Goldberg J."/>
            <person name="Gonzalez-Hilarion S."/>
            <person name="Gujja S."/>
            <person name="Hamlin J.L."/>
            <person name="Hsueh Y.-P."/>
            <person name="Ianiri G."/>
            <person name="Jones S."/>
            <person name="Kodira C.D."/>
            <person name="Kozubowski L."/>
            <person name="Lam W."/>
            <person name="Marra M."/>
            <person name="Mesner L.D."/>
            <person name="Mieczkowski P.A."/>
            <person name="Moyrand F."/>
            <person name="Nielsen K."/>
            <person name="Proux C."/>
            <person name="Rossignol T."/>
            <person name="Schein J.E."/>
            <person name="Sun S."/>
            <person name="Wollschlaeger C."/>
            <person name="Wood I.A."/>
            <person name="Zeng Q."/>
            <person name="Neuveglise C."/>
            <person name="Newlon C.S."/>
            <person name="Perfect J.R."/>
            <person name="Lodge J.K."/>
            <person name="Idnurm A."/>
            <person name="Stajich J.E."/>
            <person name="Kronstad J.W."/>
            <person name="Sanyal K."/>
            <person name="Heitman J."/>
            <person name="Fraser J.A."/>
            <person name="Cuomo C.A."/>
            <person name="Dietrich F.S."/>
        </authorList>
    </citation>
    <scope>NUCLEOTIDE SEQUENCE [LARGE SCALE GENOMIC DNA]</scope>
    <source>
        <strain>H99 / ATCC 208821 / CBS 10515 / FGSC 9487</strain>
    </source>
</reference>
<reference evidence="8" key="3">
    <citation type="journal article" date="2003" name="Infect. Immun.">
        <title>Superoxide dismutase influences the virulence of Cryptococcus neoformans by affecting growth within macrophages.</title>
        <authorList>
            <person name="Cox G.M."/>
            <person name="Harrison T.S."/>
            <person name="McDade H.C."/>
            <person name="Taborda C.P."/>
            <person name="Heinrich G."/>
            <person name="Casadevall A."/>
            <person name="Perfect J.R."/>
        </authorList>
    </citation>
    <scope>FUNCTION</scope>
    <scope>CATALYTIC ACTIVITY</scope>
    <scope>INDUCTION</scope>
    <scope>DISRUPTION PHENOTYPE</scope>
</reference>
<reference evidence="8" key="4">
    <citation type="journal article" date="2006" name="Eukaryot. Cell">
        <title>Lipid rafts in Cryptococcus neoformans concentrate the virulence determinants phospholipase B1 and Cu/Zn superoxide dismutase.</title>
        <authorList>
            <person name="Siafakas A.R."/>
            <person name="Wright L.C."/>
            <person name="Sorrell T.C."/>
            <person name="Djordjevic J.T."/>
        </authorList>
    </citation>
    <scope>FUNCTION</scope>
    <scope>CATALYTIC ACTIVITY</scope>
    <scope>SUBCELLULAR LOCATION</scope>
    <scope>DISRUPTION PHENOTYPE</scope>
</reference>
<reference evidence="8" key="5">
    <citation type="journal article" date="2021" name="J. Biol. Chem.">
        <title>Transcription factor-driven alternative localization of Cryptococcus neoformans superoxide dismutase.</title>
        <authorList>
            <person name="Smith A.D."/>
            <person name="Garcia-Santamarina S."/>
            <person name="Ralle M."/>
            <person name="Loiselle D.R."/>
            <person name="Haystead T.A."/>
            <person name="Thiele D.J."/>
        </authorList>
    </citation>
    <scope>SUBCELLULAR LOCATION</scope>
    <scope>INDUCTION</scope>
</reference>
<sequence length="154" mass="16148">MVKAVVVLKGESYVHGTVCFTQESENAPVCITGEIKDMDADAKRGMHVHEFGDNTNGCTSAGPHYNPFKKHHGAPTDSERHVGDLGNIQTNSCGAAQLDFSDKIISLYGPHSIIGRSLVVHASTDDLGKGGNEESLKTGNAGARLACGVIGIST</sequence>
<proteinExistence type="evidence at protein level"/>
<accession>J9VLJ9</accession>
<accession>Q9C0S4</accession>
<protein>
    <recommendedName>
        <fullName evidence="3">Superoxide dismutase [Cu-Zn]</fullName>
        <ecNumber evidence="9 10">1.15.1.1</ecNumber>
    </recommendedName>
    <alternativeName>
        <fullName evidence="7">CnSOD1</fullName>
    </alternativeName>
</protein>
<gene>
    <name evidence="7" type="primary">SOD1</name>
    <name evidence="12" type="ORF">CNAG_01019</name>
</gene>
<comment type="function">
    <text evidence="4 5">Destroys radicals which are normally produced within the cells and which are toxic to biological systems (PubMed:12496163, PubMed:16524904). Destroys radicals produced by host defense mechanisms (PubMed:12496163).</text>
</comment>
<comment type="catalytic activity">
    <reaction evidence="9 10">
        <text>2 superoxide + 2 H(+) = H2O2 + O2</text>
        <dbReference type="Rhea" id="RHEA:20696"/>
        <dbReference type="ChEBI" id="CHEBI:15378"/>
        <dbReference type="ChEBI" id="CHEBI:15379"/>
        <dbReference type="ChEBI" id="CHEBI:16240"/>
        <dbReference type="ChEBI" id="CHEBI:18421"/>
        <dbReference type="EC" id="1.15.1.1"/>
    </reaction>
</comment>
<comment type="cofactor">
    <cofactor evidence="1">
        <name>Cu cation</name>
        <dbReference type="ChEBI" id="CHEBI:23378"/>
    </cofactor>
    <text evidence="1">Binds 1 copper ion per subunit.</text>
</comment>
<comment type="cofactor">
    <cofactor evidence="1">
        <name>Zn(2+)</name>
        <dbReference type="ChEBI" id="CHEBI:29105"/>
    </cofactor>
    <text evidence="1">Binds 1 zinc ion per subunit.</text>
</comment>
<comment type="subunit">
    <text evidence="2">Homodimer.</text>
</comment>
<comment type="subcellular location">
    <subcellularLocation>
        <location evidence="6">Cytoplasm</location>
    </subcellularLocation>
    <subcellularLocation>
        <location evidence="6">Mitochondrion</location>
    </subcellularLocation>
    <subcellularLocation>
        <location evidence="5">Cell membrane</location>
        <topology evidence="8">Peripheral membrane protein</topology>
    </subcellularLocation>
    <text evidence="5">Localizes to lipid rafts in the cell membrane.</text>
</comment>
<comment type="induction">
    <text evidence="4 6">Repressed when copper levels are low in a CUF1-dependent manner (at protein level) (PubMed:33567338). Induced by high temperature (PubMed:12496163).</text>
</comment>
<comment type="disruption phenotype">
    <text evidence="4 5">Decreases cellular superoxide dismutase activity (PubMed:16524904). Sensitive to oxygen radicals (PubMed:12496163). Decreases virulence in a mouse inhalation model of infection (PubMed:12496163).</text>
</comment>
<comment type="similarity">
    <text evidence="8">Belongs to the Cu-Zn superoxide dismutase family.</text>
</comment>
<evidence type="ECO:0000250" key="1">
    <source>
        <dbReference type="UniProtKB" id="P00445"/>
    </source>
</evidence>
<evidence type="ECO:0000250" key="2">
    <source>
        <dbReference type="UniProtKB" id="P85978"/>
    </source>
</evidence>
<evidence type="ECO:0000255" key="3">
    <source>
        <dbReference type="RuleBase" id="RU000393"/>
    </source>
</evidence>
<evidence type="ECO:0000269" key="4">
    <source>
    </source>
</evidence>
<evidence type="ECO:0000269" key="5">
    <source>
    </source>
</evidence>
<evidence type="ECO:0000269" key="6">
    <source>
    </source>
</evidence>
<evidence type="ECO:0000303" key="7">
    <source>
    </source>
</evidence>
<evidence type="ECO:0000305" key="8"/>
<evidence type="ECO:0000305" key="9">
    <source>
    </source>
</evidence>
<evidence type="ECO:0000305" key="10">
    <source>
    </source>
</evidence>
<evidence type="ECO:0000312" key="11">
    <source>
        <dbReference type="EMBL" id="AAK31915.1"/>
    </source>
</evidence>
<evidence type="ECO:0000312" key="12">
    <source>
        <dbReference type="EMBL" id="AFR95128.1"/>
    </source>
</evidence>
<evidence type="ECO:0000312" key="13">
    <source>
        <dbReference type="Proteomes" id="UP000010091"/>
    </source>
</evidence>
<dbReference type="EC" id="1.15.1.1" evidence="9 10"/>
<dbReference type="EMBL" id="AF248045">
    <property type="protein sequence ID" value="AAK31914.1"/>
    <property type="molecule type" value="mRNA"/>
</dbReference>
<dbReference type="EMBL" id="AF248046">
    <property type="protein sequence ID" value="AAK31915.1"/>
    <property type="molecule type" value="Genomic_DNA"/>
</dbReference>
<dbReference type="EMBL" id="CP003824">
    <property type="protein sequence ID" value="AFR95128.1"/>
    <property type="molecule type" value="Genomic_DNA"/>
</dbReference>
<dbReference type="RefSeq" id="XP_012049259.1">
    <property type="nucleotide sequence ID" value="XM_012193869.1"/>
</dbReference>
<dbReference type="SMR" id="J9VLJ9"/>
<dbReference type="SwissPalm" id="J9VLJ9"/>
<dbReference type="GeneID" id="23884765"/>
<dbReference type="KEGG" id="cng:CNAG_01019"/>
<dbReference type="VEuPathDB" id="FungiDB:CNAG_01019"/>
<dbReference type="HOGENOM" id="CLU_056632_4_1_1"/>
<dbReference type="OrthoDB" id="1584at5206"/>
<dbReference type="Proteomes" id="UP000010091">
    <property type="component" value="Chromosome 5"/>
</dbReference>
<dbReference type="GO" id="GO:0005737">
    <property type="term" value="C:cytoplasm"/>
    <property type="evidence" value="ECO:0000314"/>
    <property type="project" value="UniProtKB"/>
</dbReference>
<dbReference type="GO" id="GO:0005739">
    <property type="term" value="C:mitochondrion"/>
    <property type="evidence" value="ECO:0000314"/>
    <property type="project" value="UniProtKB"/>
</dbReference>
<dbReference type="GO" id="GO:0044853">
    <property type="term" value="C:plasma membrane raft"/>
    <property type="evidence" value="ECO:0000314"/>
    <property type="project" value="UniProtKB"/>
</dbReference>
<dbReference type="GO" id="GO:0005507">
    <property type="term" value="F:copper ion binding"/>
    <property type="evidence" value="ECO:0007669"/>
    <property type="project" value="InterPro"/>
</dbReference>
<dbReference type="GO" id="GO:0004784">
    <property type="term" value="F:superoxide dismutase activity"/>
    <property type="evidence" value="ECO:0000315"/>
    <property type="project" value="UniProtKB"/>
</dbReference>
<dbReference type="GO" id="GO:0019430">
    <property type="term" value="P:removal of superoxide radicals"/>
    <property type="evidence" value="ECO:0000315"/>
    <property type="project" value="UniProtKB"/>
</dbReference>
<dbReference type="GO" id="GO:0052164">
    <property type="term" value="P:symbiont defense to host-produced reactive oxygen species"/>
    <property type="evidence" value="ECO:0000315"/>
    <property type="project" value="UniProtKB"/>
</dbReference>
<dbReference type="CDD" id="cd00305">
    <property type="entry name" value="Cu-Zn_Superoxide_Dismutase"/>
    <property type="match status" value="1"/>
</dbReference>
<dbReference type="FunFam" id="2.60.40.200:FF:000001">
    <property type="entry name" value="Superoxide dismutase [Cu-Zn]"/>
    <property type="match status" value="1"/>
</dbReference>
<dbReference type="Gene3D" id="2.60.40.200">
    <property type="entry name" value="Superoxide dismutase, copper/zinc binding domain"/>
    <property type="match status" value="1"/>
</dbReference>
<dbReference type="InterPro" id="IPR036423">
    <property type="entry name" value="SOD-like_Cu/Zn_dom_sf"/>
</dbReference>
<dbReference type="InterPro" id="IPR024134">
    <property type="entry name" value="SOD_Cu/Zn_/chaperone"/>
</dbReference>
<dbReference type="InterPro" id="IPR018152">
    <property type="entry name" value="SOD_Cu/Zn_BS"/>
</dbReference>
<dbReference type="InterPro" id="IPR001424">
    <property type="entry name" value="SOD_Cu_Zn_dom"/>
</dbReference>
<dbReference type="PANTHER" id="PTHR10003">
    <property type="entry name" value="SUPEROXIDE DISMUTASE CU-ZN -RELATED"/>
    <property type="match status" value="1"/>
</dbReference>
<dbReference type="Pfam" id="PF00080">
    <property type="entry name" value="Sod_Cu"/>
    <property type="match status" value="1"/>
</dbReference>
<dbReference type="PRINTS" id="PR00068">
    <property type="entry name" value="CUZNDISMTASE"/>
</dbReference>
<dbReference type="SUPFAM" id="SSF49329">
    <property type="entry name" value="Cu,Zn superoxide dismutase-like"/>
    <property type="match status" value="1"/>
</dbReference>
<dbReference type="PROSITE" id="PS00087">
    <property type="entry name" value="SOD_CU_ZN_1"/>
    <property type="match status" value="1"/>
</dbReference>
<dbReference type="PROSITE" id="PS00332">
    <property type="entry name" value="SOD_CU_ZN_2"/>
    <property type="match status" value="1"/>
</dbReference>
<organism evidence="13">
    <name type="scientific">Cryptococcus neoformans var. grubii serotype A (strain H99 / ATCC 208821 / CBS 10515 / FGSC 9487)</name>
    <name type="common">Filobasidiella neoformans var. grubii</name>
    <dbReference type="NCBI Taxonomy" id="235443"/>
    <lineage>
        <taxon>Eukaryota</taxon>
        <taxon>Fungi</taxon>
        <taxon>Dikarya</taxon>
        <taxon>Basidiomycota</taxon>
        <taxon>Agaricomycotina</taxon>
        <taxon>Tremellomycetes</taxon>
        <taxon>Tremellales</taxon>
        <taxon>Cryptococcaceae</taxon>
        <taxon>Cryptococcus</taxon>
        <taxon>Cryptococcus neoformans species complex</taxon>
    </lineage>
</organism>
<name>SODC_CRYNH</name>